<organism>
    <name type="scientific">Thermococcus gammatolerans (strain DSM 15229 / JCM 11827 / EJ3)</name>
    <dbReference type="NCBI Taxonomy" id="593117"/>
    <lineage>
        <taxon>Archaea</taxon>
        <taxon>Methanobacteriati</taxon>
        <taxon>Methanobacteriota</taxon>
        <taxon>Thermococci</taxon>
        <taxon>Thermococcales</taxon>
        <taxon>Thermococcaceae</taxon>
        <taxon>Thermococcus</taxon>
    </lineage>
</organism>
<gene>
    <name evidence="1" type="primary">rnz</name>
    <name type="ordered locus">TGAM_1082</name>
</gene>
<reference key="1">
    <citation type="journal article" date="2007" name="Genome Biol.">
        <title>Genome analysis and genome-wide proteomics of Thermococcus gammatolerans, the most radioresistant organism known amongst the Archaea.</title>
        <authorList>
            <person name="Zivanovic Y."/>
            <person name="Armengaud J."/>
            <person name="Lagorce A."/>
            <person name="Leplat C."/>
            <person name="Guerin P."/>
            <person name="Dutertre M."/>
            <person name="Anthouard V."/>
            <person name="Forterre P."/>
            <person name="Wincker P."/>
            <person name="Confalonieri F."/>
        </authorList>
    </citation>
    <scope>NUCLEOTIDE SEQUENCE [LARGE SCALE GENOMIC DNA]</scope>
    <source>
        <strain>DSM 15229 / JCM 11827 / EJ3</strain>
    </source>
</reference>
<keyword id="KW-0255">Endonuclease</keyword>
<keyword id="KW-0378">Hydrolase</keyword>
<keyword id="KW-0479">Metal-binding</keyword>
<keyword id="KW-0540">Nuclease</keyword>
<keyword id="KW-1185">Reference proteome</keyword>
<keyword id="KW-0819">tRNA processing</keyword>
<keyword id="KW-0862">Zinc</keyword>
<accession>C5A5S2</accession>
<protein>
    <recommendedName>
        <fullName evidence="1">Ribonuclease Z</fullName>
        <shortName evidence="1">RNase Z</shortName>
        <ecNumber evidence="1">3.1.26.11</ecNumber>
    </recommendedName>
    <alternativeName>
        <fullName evidence="1">tRNA 3 endonuclease</fullName>
    </alternativeName>
    <alternativeName>
        <fullName evidence="1">tRNase Z</fullName>
    </alternativeName>
</protein>
<sequence>MLQVIFLGSGGIMPTRERNVPAIALRYKGEIILFDVGEGTIRQMNSAKLSPMRVEKIFITHFHGDHYLGLGGLIQTMNLWNREKPLHIYGPKYTFEFVQNFLNSGFFRPGFEVHVHELGETRLKFKDYEIWSFKVEHGIPALGYVFKEKDKRGKFLPEKLAQYGLRPGPILGKLEKDGKIEWNGQVIRLEDVTGPRRRGVKVVYTGDTEPCERVRLFAERADLLIHDATYLSDGDRGDSYHSTVEEACETARRAKVKLLALFHRAFRYTYDEYLSGASKICQETGVNFVIPRDFDVLTYKSGEWKRENLLEEGK</sequence>
<name>RNZ_THEGJ</name>
<dbReference type="EC" id="3.1.26.11" evidence="1"/>
<dbReference type="EMBL" id="CP001398">
    <property type="protein sequence ID" value="ACS33584.1"/>
    <property type="molecule type" value="Genomic_DNA"/>
</dbReference>
<dbReference type="RefSeq" id="WP_015858697.1">
    <property type="nucleotide sequence ID" value="NC_012804.1"/>
</dbReference>
<dbReference type="SMR" id="C5A5S2"/>
<dbReference type="STRING" id="593117.TGAM_1082"/>
<dbReference type="PaxDb" id="593117-TGAM_1082"/>
<dbReference type="GeneID" id="7986956"/>
<dbReference type="KEGG" id="tga:TGAM_1082"/>
<dbReference type="PATRIC" id="fig|593117.10.peg.1081"/>
<dbReference type="eggNOG" id="arCOG00501">
    <property type="taxonomic scope" value="Archaea"/>
</dbReference>
<dbReference type="HOGENOM" id="CLU_031317_2_1_2"/>
<dbReference type="OrthoDB" id="85118at2157"/>
<dbReference type="Proteomes" id="UP000001488">
    <property type="component" value="Chromosome"/>
</dbReference>
<dbReference type="GO" id="GO:0042781">
    <property type="term" value="F:3'-tRNA processing endoribonuclease activity"/>
    <property type="evidence" value="ECO:0007669"/>
    <property type="project" value="UniProtKB-UniRule"/>
</dbReference>
<dbReference type="GO" id="GO:0008270">
    <property type="term" value="F:zinc ion binding"/>
    <property type="evidence" value="ECO:0007669"/>
    <property type="project" value="UniProtKB-UniRule"/>
</dbReference>
<dbReference type="CDD" id="cd07717">
    <property type="entry name" value="RNaseZ_ZiPD-like_MBL-fold"/>
    <property type="match status" value="1"/>
</dbReference>
<dbReference type="Gene3D" id="3.60.15.10">
    <property type="entry name" value="Ribonuclease Z/Hydroxyacylglutathione hydrolase-like"/>
    <property type="match status" value="1"/>
</dbReference>
<dbReference type="HAMAP" id="MF_01818">
    <property type="entry name" value="RNase_Z_BN"/>
    <property type="match status" value="1"/>
</dbReference>
<dbReference type="InterPro" id="IPR001279">
    <property type="entry name" value="Metallo-B-lactamas"/>
</dbReference>
<dbReference type="InterPro" id="IPR036866">
    <property type="entry name" value="RibonucZ/Hydroxyglut_hydro"/>
</dbReference>
<dbReference type="InterPro" id="IPR013471">
    <property type="entry name" value="RNase_Z/BN"/>
</dbReference>
<dbReference type="NCBIfam" id="NF000801">
    <property type="entry name" value="PRK00055.1-3"/>
    <property type="match status" value="1"/>
</dbReference>
<dbReference type="NCBIfam" id="TIGR02651">
    <property type="entry name" value="RNase_Z"/>
    <property type="match status" value="1"/>
</dbReference>
<dbReference type="PANTHER" id="PTHR46018">
    <property type="entry name" value="ZINC PHOSPHODIESTERASE ELAC PROTEIN 1"/>
    <property type="match status" value="1"/>
</dbReference>
<dbReference type="PANTHER" id="PTHR46018:SF2">
    <property type="entry name" value="ZINC PHOSPHODIESTERASE ELAC PROTEIN 1"/>
    <property type="match status" value="1"/>
</dbReference>
<dbReference type="Pfam" id="PF00753">
    <property type="entry name" value="Lactamase_B"/>
    <property type="match status" value="1"/>
</dbReference>
<dbReference type="Pfam" id="PF12706">
    <property type="entry name" value="Lactamase_B_2"/>
    <property type="match status" value="1"/>
</dbReference>
<dbReference type="SMART" id="SM00849">
    <property type="entry name" value="Lactamase_B"/>
    <property type="match status" value="1"/>
</dbReference>
<dbReference type="SUPFAM" id="SSF56281">
    <property type="entry name" value="Metallo-hydrolase/oxidoreductase"/>
    <property type="match status" value="1"/>
</dbReference>
<comment type="function">
    <text evidence="1">Zinc phosphodiesterase, which displays some tRNA 3'-processing endonuclease activity. Probably involved in tRNA maturation, by removing a 3'-trailer from precursor tRNA.</text>
</comment>
<comment type="catalytic activity">
    <reaction evidence="1">
        <text>Endonucleolytic cleavage of RNA, removing extra 3' nucleotides from tRNA precursor, generating 3' termini of tRNAs. A 3'-hydroxy group is left at the tRNA terminus and a 5'-phosphoryl group is left at the trailer molecule.</text>
        <dbReference type="EC" id="3.1.26.11"/>
    </reaction>
</comment>
<comment type="cofactor">
    <cofactor evidence="1">
        <name>Zn(2+)</name>
        <dbReference type="ChEBI" id="CHEBI:29105"/>
    </cofactor>
    <text evidence="1">Binds 2 Zn(2+) ions.</text>
</comment>
<comment type="subunit">
    <text evidence="1">Homodimer.</text>
</comment>
<comment type="similarity">
    <text evidence="1">Belongs to the RNase Z family.</text>
</comment>
<proteinExistence type="inferred from homology"/>
<evidence type="ECO:0000255" key="1">
    <source>
        <dbReference type="HAMAP-Rule" id="MF_01818"/>
    </source>
</evidence>
<feature type="chain" id="PRO_1000216020" description="Ribonuclease Z">
    <location>
        <begin position="1"/>
        <end position="314"/>
    </location>
</feature>
<feature type="active site" description="Proton acceptor" evidence="1">
    <location>
        <position position="65"/>
    </location>
</feature>
<feature type="binding site" evidence="1">
    <location>
        <position position="61"/>
    </location>
    <ligand>
        <name>Zn(2+)</name>
        <dbReference type="ChEBI" id="CHEBI:29105"/>
        <label>1</label>
        <note>catalytic</note>
    </ligand>
</feature>
<feature type="binding site" evidence="1">
    <location>
        <position position="63"/>
    </location>
    <ligand>
        <name>Zn(2+)</name>
        <dbReference type="ChEBI" id="CHEBI:29105"/>
        <label>1</label>
        <note>catalytic</note>
    </ligand>
</feature>
<feature type="binding site" evidence="1">
    <location>
        <position position="65"/>
    </location>
    <ligand>
        <name>Zn(2+)</name>
        <dbReference type="ChEBI" id="CHEBI:29105"/>
        <label>2</label>
        <note>catalytic</note>
    </ligand>
</feature>
<feature type="binding site" evidence="1">
    <location>
        <position position="66"/>
    </location>
    <ligand>
        <name>Zn(2+)</name>
        <dbReference type="ChEBI" id="CHEBI:29105"/>
        <label>2</label>
        <note>catalytic</note>
    </ligand>
</feature>
<feature type="binding site" evidence="1">
    <location>
        <position position="137"/>
    </location>
    <ligand>
        <name>Zn(2+)</name>
        <dbReference type="ChEBI" id="CHEBI:29105"/>
        <label>1</label>
        <note>catalytic</note>
    </ligand>
</feature>
<feature type="binding site" evidence="1">
    <location>
        <position position="207"/>
    </location>
    <ligand>
        <name>Zn(2+)</name>
        <dbReference type="ChEBI" id="CHEBI:29105"/>
        <label>1</label>
        <note>catalytic</note>
    </ligand>
</feature>
<feature type="binding site" evidence="1">
    <location>
        <position position="207"/>
    </location>
    <ligand>
        <name>Zn(2+)</name>
        <dbReference type="ChEBI" id="CHEBI:29105"/>
        <label>2</label>
        <note>catalytic</note>
    </ligand>
</feature>
<feature type="binding site" evidence="1">
    <location>
        <position position="263"/>
    </location>
    <ligand>
        <name>Zn(2+)</name>
        <dbReference type="ChEBI" id="CHEBI:29105"/>
        <label>2</label>
        <note>catalytic</note>
    </ligand>
</feature>